<proteinExistence type="inferred from homology"/>
<keyword id="KW-0067">ATP-binding</keyword>
<keyword id="KW-0963">Cytoplasm</keyword>
<keyword id="KW-0217">Developmental protein</keyword>
<keyword id="KW-0418">Kinase</keyword>
<keyword id="KW-0547">Nucleotide-binding</keyword>
<keyword id="KW-0539">Nucleus</keyword>
<keyword id="KW-0597">Phosphoprotein</keyword>
<keyword id="KW-1185">Reference proteome</keyword>
<keyword id="KW-0723">Serine/threonine-protein kinase</keyword>
<keyword id="KW-0808">Transferase</keyword>
<feature type="chain" id="PRO_0000405307" description="Serine/threonine-protein kinase VRK1">
    <location>
        <begin position="1"/>
        <end position="559"/>
    </location>
</feature>
<feature type="domain" description="Protein kinase" evidence="6">
    <location>
        <begin position="32"/>
        <end position="388"/>
    </location>
</feature>
<feature type="region of interest" description="Disordered" evidence="8">
    <location>
        <begin position="315"/>
        <end position="419"/>
    </location>
</feature>
<feature type="region of interest" description="Disordered" evidence="8">
    <location>
        <begin position="448"/>
        <end position="559"/>
    </location>
</feature>
<feature type="compositionally biased region" description="Polar residues" evidence="8">
    <location>
        <begin position="405"/>
        <end position="418"/>
    </location>
</feature>
<feature type="compositionally biased region" description="Polar residues" evidence="8">
    <location>
        <begin position="449"/>
        <end position="460"/>
    </location>
</feature>
<feature type="compositionally biased region" description="Basic and acidic residues" evidence="8">
    <location>
        <begin position="533"/>
        <end position="542"/>
    </location>
</feature>
<feature type="compositionally biased region" description="Polar residues" evidence="8">
    <location>
        <begin position="545"/>
        <end position="559"/>
    </location>
</feature>
<feature type="active site" description="Proton acceptor" evidence="2 6 7">
    <location>
        <position position="167"/>
    </location>
</feature>
<feature type="binding site" evidence="2 6">
    <location>
        <begin position="38"/>
        <end position="46"/>
    </location>
    <ligand>
        <name>ATP</name>
        <dbReference type="ChEBI" id="CHEBI:30616"/>
    </ligand>
</feature>
<feature type="binding site" evidence="2 6">
    <location>
        <position position="61"/>
    </location>
    <ligand>
        <name>ATP</name>
        <dbReference type="ChEBI" id="CHEBI:30616"/>
    </ligand>
</feature>
<sequence length="559" mass="62090">MPPKKAAPKKLHELAPEVRVGLKIDDISKKTYIVGKQFATGGFGRIHTCTEDGKSQQMVMKIEPSTNGPLLTEVVVFNRILKKDMIENYKKAKKIQWIGLPHLIANGYFTYNNEKMRYMIIPKYATSLEAVREANGGSLSAKDSLTVADCVLGALEYLHDSDYAHADVKAANILLEKPNDFSSAVLVDFGLAHRTTNNVDKPDKKRAHNGTCIFTSTDAHRGNNPSFRGDVEILAYNLIMWISGSLPWLSLEASPDKVFEAKQKFVGGLPGTLQSILTNQPAPVAGCITTMFDVSRKTDYTHKVDMAKLRKKVTEAAQSASTGAQKKPKMTPSRDTTATPKRKSQRAPRVESEDEEEEEKKEVEIKPKKKVQRSRKVVEDDDEEEEVIIPKSTRSRKTKEEGTPRSFNLGMTSSTATSDRVAKKIEMKYKRLATNKPSLVPVTVADASSCESQYESNEPGPSSRVVKKRTSEERDANGEVQLKTPALVSPDVKKTKYKSGISSATKASPTELRRVPGVRNFPKGRRSMIIKETSARYQEKRATRNTKPTFDDSSCSSEV</sequence>
<gene>
    <name evidence="9" type="primary">vrk-1</name>
    <name type="ORF">CBG02540</name>
</gene>
<protein>
    <recommendedName>
        <fullName evidence="3">Serine/threonine-protein kinase VRK1</fullName>
        <ecNumber>2.7.11.1</ecNumber>
    </recommendedName>
    <alternativeName>
        <fullName evidence="3">Vaccinia-related kinase 1</fullName>
    </alternativeName>
</protein>
<name>VRK1_CAEBR</name>
<organism>
    <name type="scientific">Caenorhabditis briggsae</name>
    <dbReference type="NCBI Taxonomy" id="6238"/>
    <lineage>
        <taxon>Eukaryota</taxon>
        <taxon>Metazoa</taxon>
        <taxon>Ecdysozoa</taxon>
        <taxon>Nematoda</taxon>
        <taxon>Chromadorea</taxon>
        <taxon>Rhabditida</taxon>
        <taxon>Rhabditina</taxon>
        <taxon>Rhabditomorpha</taxon>
        <taxon>Rhabditoidea</taxon>
        <taxon>Rhabditidae</taxon>
        <taxon>Peloderinae</taxon>
        <taxon>Caenorhabditis</taxon>
    </lineage>
</organism>
<evidence type="ECO:0000250" key="1"/>
<evidence type="ECO:0000250" key="2">
    <source>
        <dbReference type="UniProtKB" id="P28523"/>
    </source>
</evidence>
<evidence type="ECO:0000250" key="3">
    <source>
        <dbReference type="UniProtKB" id="Q19848"/>
    </source>
</evidence>
<evidence type="ECO:0000250" key="4">
    <source>
        <dbReference type="UniProtKB" id="Q99986"/>
    </source>
</evidence>
<evidence type="ECO:0000255" key="5"/>
<evidence type="ECO:0000255" key="6">
    <source>
        <dbReference type="PROSITE-ProRule" id="PRU00159"/>
    </source>
</evidence>
<evidence type="ECO:0000255" key="7">
    <source>
        <dbReference type="PROSITE-ProRule" id="PRU10027"/>
    </source>
</evidence>
<evidence type="ECO:0000256" key="8">
    <source>
        <dbReference type="SAM" id="MobiDB-lite"/>
    </source>
</evidence>
<evidence type="ECO:0000312" key="9">
    <source>
        <dbReference type="WormBase" id="CBG02540"/>
    </source>
</evidence>
<dbReference type="EC" id="2.7.11.1"/>
<dbReference type="EMBL" id="HE601438">
    <property type="protein sequence ID" value="CAP23993.1"/>
    <property type="molecule type" value="Genomic_DNA"/>
</dbReference>
<dbReference type="SMR" id="A8WU31"/>
<dbReference type="FunCoup" id="A8WU31">
    <property type="interactions" value="2102"/>
</dbReference>
<dbReference type="STRING" id="6238.A8WU31"/>
<dbReference type="EnsemblMetazoa" id="CBG02540.1">
    <property type="protein sequence ID" value="CBG02540.1"/>
    <property type="gene ID" value="WBGene00025576"/>
</dbReference>
<dbReference type="KEGG" id="cbr:CBG_02540"/>
<dbReference type="CTD" id="8572349"/>
<dbReference type="WormBase" id="CBG02540">
    <property type="protein sequence ID" value="CBP06284"/>
    <property type="gene ID" value="WBGene00025576"/>
    <property type="gene designation" value="Cbr-vrk-1"/>
</dbReference>
<dbReference type="eggNOG" id="KOG1164">
    <property type="taxonomic scope" value="Eukaryota"/>
</dbReference>
<dbReference type="HOGENOM" id="CLU_019279_4_0_1"/>
<dbReference type="InParanoid" id="A8WU31"/>
<dbReference type="OMA" id="RECWDER"/>
<dbReference type="OrthoDB" id="2687620at2759"/>
<dbReference type="Proteomes" id="UP000008549">
    <property type="component" value="Unassembled WGS sequence"/>
</dbReference>
<dbReference type="GO" id="GO:0015030">
    <property type="term" value="C:Cajal body"/>
    <property type="evidence" value="ECO:0007669"/>
    <property type="project" value="UniProtKB-SubCell"/>
</dbReference>
<dbReference type="GO" id="GO:0000785">
    <property type="term" value="C:chromatin"/>
    <property type="evidence" value="ECO:0007669"/>
    <property type="project" value="EnsemblMetazoa"/>
</dbReference>
<dbReference type="GO" id="GO:0005737">
    <property type="term" value="C:cytoplasm"/>
    <property type="evidence" value="ECO:0000318"/>
    <property type="project" value="GO_Central"/>
</dbReference>
<dbReference type="GO" id="GO:0005635">
    <property type="term" value="C:nuclear envelope"/>
    <property type="evidence" value="ECO:0007669"/>
    <property type="project" value="EnsemblMetazoa"/>
</dbReference>
<dbReference type="GO" id="GO:0005634">
    <property type="term" value="C:nucleus"/>
    <property type="evidence" value="ECO:0000318"/>
    <property type="project" value="GO_Central"/>
</dbReference>
<dbReference type="GO" id="GO:0005524">
    <property type="term" value="F:ATP binding"/>
    <property type="evidence" value="ECO:0007669"/>
    <property type="project" value="UniProtKB-KW"/>
</dbReference>
<dbReference type="GO" id="GO:0106310">
    <property type="term" value="F:protein serine kinase activity"/>
    <property type="evidence" value="ECO:0007669"/>
    <property type="project" value="RHEA"/>
</dbReference>
<dbReference type="GO" id="GO:0004674">
    <property type="term" value="F:protein serine/threonine kinase activity"/>
    <property type="evidence" value="ECO:0000318"/>
    <property type="project" value="GO_Central"/>
</dbReference>
<dbReference type="GO" id="GO:0001708">
    <property type="term" value="P:cell fate specification"/>
    <property type="evidence" value="ECO:0007669"/>
    <property type="project" value="EnsemblMetazoa"/>
</dbReference>
<dbReference type="GO" id="GO:0006974">
    <property type="term" value="P:DNA damage response"/>
    <property type="evidence" value="ECO:0000318"/>
    <property type="project" value="GO_Central"/>
</dbReference>
<dbReference type="GO" id="GO:0007163">
    <property type="term" value="P:establishment or maintenance of cell polarity"/>
    <property type="evidence" value="ECO:0007669"/>
    <property type="project" value="EnsemblMetazoa"/>
</dbReference>
<dbReference type="GO" id="GO:0008406">
    <property type="term" value="P:gonad development"/>
    <property type="evidence" value="ECO:0007669"/>
    <property type="project" value="EnsemblMetazoa"/>
</dbReference>
<dbReference type="GO" id="GO:0040036">
    <property type="term" value="P:regulation of fibroblast growth factor receptor signaling pathway"/>
    <property type="evidence" value="ECO:0007669"/>
    <property type="project" value="EnsemblMetazoa"/>
</dbReference>
<dbReference type="GO" id="GO:0007165">
    <property type="term" value="P:signal transduction"/>
    <property type="evidence" value="ECO:0000318"/>
    <property type="project" value="GO_Central"/>
</dbReference>
<dbReference type="FunFam" id="1.10.510.10:FF:001613">
    <property type="entry name" value="Serine/threonine-protein kinase VRK1"/>
    <property type="match status" value="1"/>
</dbReference>
<dbReference type="Gene3D" id="1.10.510.10">
    <property type="entry name" value="Transferase(Phosphotransferase) domain 1"/>
    <property type="match status" value="1"/>
</dbReference>
<dbReference type="InterPro" id="IPR050235">
    <property type="entry name" value="CK1_Ser-Thr_kinase"/>
</dbReference>
<dbReference type="InterPro" id="IPR011009">
    <property type="entry name" value="Kinase-like_dom_sf"/>
</dbReference>
<dbReference type="InterPro" id="IPR000719">
    <property type="entry name" value="Prot_kinase_dom"/>
</dbReference>
<dbReference type="InterPro" id="IPR008271">
    <property type="entry name" value="Ser/Thr_kinase_AS"/>
</dbReference>
<dbReference type="PANTHER" id="PTHR11909">
    <property type="entry name" value="CASEIN KINASE-RELATED"/>
    <property type="match status" value="1"/>
</dbReference>
<dbReference type="Pfam" id="PF00069">
    <property type="entry name" value="Pkinase"/>
    <property type="match status" value="1"/>
</dbReference>
<dbReference type="SMART" id="SM00220">
    <property type="entry name" value="S_TKc"/>
    <property type="match status" value="1"/>
</dbReference>
<dbReference type="SUPFAM" id="SSF56112">
    <property type="entry name" value="Protein kinase-like (PK-like)"/>
    <property type="match status" value="1"/>
</dbReference>
<dbReference type="PROSITE" id="PS50011">
    <property type="entry name" value="PROTEIN_KINASE_DOM"/>
    <property type="match status" value="1"/>
</dbReference>
<dbReference type="PROSITE" id="PS00108">
    <property type="entry name" value="PROTEIN_KINASE_ST"/>
    <property type="match status" value="1"/>
</dbReference>
<comment type="function">
    <text evidence="1">Serine/threonine kinase that phosphorylates baf-1, thus regulating the association of baf-1 with chromatin and nuclear membrane proteins during nuclear envelope formation. May act through the egl-17 signaling pathway. Essential in hermaphrodites for formation of the vulva, uterus, and uterine seam cells and for development and maintenance of the somatic gonad and thus the germ line. Acts to prevent cep-1 from triggering an inappropriate cell cycle arrest, thereby promoting germ cell proliferation. Regulates anchor cell polarity and the timing of anchor cell invasion through the basement membranes separating vulval and somatic gonadal cells during the L3 larval stage (By similarity).</text>
</comment>
<comment type="catalytic activity">
    <reaction evidence="3">
        <text>L-seryl-[protein] + ATP = O-phospho-L-seryl-[protein] + ADP + H(+)</text>
        <dbReference type="Rhea" id="RHEA:17989"/>
        <dbReference type="Rhea" id="RHEA-COMP:9863"/>
        <dbReference type="Rhea" id="RHEA-COMP:11604"/>
        <dbReference type="ChEBI" id="CHEBI:15378"/>
        <dbReference type="ChEBI" id="CHEBI:29999"/>
        <dbReference type="ChEBI" id="CHEBI:30616"/>
        <dbReference type="ChEBI" id="CHEBI:83421"/>
        <dbReference type="ChEBI" id="CHEBI:456216"/>
        <dbReference type="EC" id="2.7.11.1"/>
    </reaction>
</comment>
<comment type="catalytic activity">
    <reaction evidence="3">
        <text>L-threonyl-[protein] + ATP = O-phospho-L-threonyl-[protein] + ADP + H(+)</text>
        <dbReference type="Rhea" id="RHEA:46608"/>
        <dbReference type="Rhea" id="RHEA-COMP:11060"/>
        <dbReference type="Rhea" id="RHEA-COMP:11605"/>
        <dbReference type="ChEBI" id="CHEBI:15378"/>
        <dbReference type="ChEBI" id="CHEBI:30013"/>
        <dbReference type="ChEBI" id="CHEBI:30616"/>
        <dbReference type="ChEBI" id="CHEBI:61977"/>
        <dbReference type="ChEBI" id="CHEBI:456216"/>
        <dbReference type="EC" id="2.7.11.1"/>
    </reaction>
</comment>
<comment type="subcellular location">
    <subcellularLocation>
        <location evidence="3">Nucleus</location>
    </subcellularLocation>
    <subcellularLocation>
        <location evidence="4">Cytoplasm</location>
    </subcellularLocation>
    <subcellularLocation>
        <location evidence="4">Nucleus</location>
        <location evidence="4">Cajal body</location>
    </subcellularLocation>
    <text evidence="3">Nuclear during interphase, accumulates at the nuclear rim in prophase and localizes to chromatin throughout metaphase, anaphase and telophase.</text>
</comment>
<comment type="PTM">
    <text evidence="3">Autophosphorylates in vitro.</text>
</comment>
<comment type="similarity">
    <text evidence="5">Belongs to the protein kinase superfamily. CK1 Ser/Thr protein kinase family. VRK subfamily.</text>
</comment>
<accession>A8WU31</accession>
<reference key="1">
    <citation type="journal article" date="2003" name="PLoS Biol.">
        <title>The genome sequence of Caenorhabditis briggsae: a platform for comparative genomics.</title>
        <authorList>
            <person name="Stein L.D."/>
            <person name="Bao Z."/>
            <person name="Blasiar D."/>
            <person name="Blumenthal T."/>
            <person name="Brent M.R."/>
            <person name="Chen N."/>
            <person name="Chinwalla A."/>
            <person name="Clarke L."/>
            <person name="Clee C."/>
            <person name="Coghlan A."/>
            <person name="Coulson A."/>
            <person name="D'Eustachio P."/>
            <person name="Fitch D.H.A."/>
            <person name="Fulton L.A."/>
            <person name="Fulton R.E."/>
            <person name="Griffiths-Jones S."/>
            <person name="Harris T.W."/>
            <person name="Hillier L.W."/>
            <person name="Kamath R."/>
            <person name="Kuwabara P.E."/>
            <person name="Mardis E.R."/>
            <person name="Marra M.A."/>
            <person name="Miner T.L."/>
            <person name="Minx P."/>
            <person name="Mullikin J.C."/>
            <person name="Plumb R.W."/>
            <person name="Rogers J."/>
            <person name="Schein J.E."/>
            <person name="Sohrmann M."/>
            <person name="Spieth J."/>
            <person name="Stajich J.E."/>
            <person name="Wei C."/>
            <person name="Willey D."/>
            <person name="Wilson R.K."/>
            <person name="Durbin R.M."/>
            <person name="Waterston R.H."/>
        </authorList>
    </citation>
    <scope>NUCLEOTIDE SEQUENCE [LARGE SCALE GENOMIC DNA]</scope>
    <source>
        <strain>AF16</strain>
    </source>
</reference>